<gene>
    <name type="primary">phoB</name>
    <name type="synonym">phoAIII</name>
    <name type="ordered locus">BSU05740</name>
</gene>
<comment type="catalytic activity">
    <reaction evidence="2">
        <text>a phosphate monoester + H2O = an alcohol + phosphate</text>
        <dbReference type="Rhea" id="RHEA:15017"/>
        <dbReference type="ChEBI" id="CHEBI:15377"/>
        <dbReference type="ChEBI" id="CHEBI:30879"/>
        <dbReference type="ChEBI" id="CHEBI:43474"/>
        <dbReference type="ChEBI" id="CHEBI:67140"/>
        <dbReference type="EC" id="3.1.3.1"/>
    </reaction>
</comment>
<comment type="cofactor">
    <cofactor>
        <name>Mg(2+)</name>
        <dbReference type="ChEBI" id="CHEBI:18420"/>
    </cofactor>
    <text>Binds 1 Mg(2+) ion.</text>
</comment>
<comment type="cofactor">
    <cofactor>
        <name>Zn(2+)</name>
        <dbReference type="ChEBI" id="CHEBI:29105"/>
    </cofactor>
    <text>Binds 2 Zn(2+) ions.</text>
</comment>
<comment type="subunit">
    <text>Monomer.</text>
</comment>
<comment type="similarity">
    <text evidence="4">Belongs to the alkaline phosphatase family.</text>
</comment>
<evidence type="ECO:0000250" key="1"/>
<evidence type="ECO:0000255" key="2">
    <source>
        <dbReference type="PROSITE-ProRule" id="PRU10042"/>
    </source>
</evidence>
<evidence type="ECO:0000269" key="3">
    <source>
    </source>
</evidence>
<evidence type="ECO:0000305" key="4"/>
<sequence>MKKFPKKLLPIAVLSSIAFSSLASGSVPEASAQEKKKGNQDEIKNVIVLIGDGMGVSYTSAYRYLKDNKKTKVVEPTAFDQYLVGQQTTYPDDPEQNVTDSAAAATAMSAGIKTYNNAIAVDNDGSEAKTVLEAAKEKGKATGLVATSEITHATPASFGSHDHSRKNMNSIADDYFDEMVNGKHKIDVLLGGGKSNFDRKDRNLIKEFKKAGYSYVDDRKDMLKNKDSQVLGLFADGGLPKKIDRTKDIPSLKDMTNTAIKKLNKDKDGFFLMVEGSQIDWAGHDNDIVGAMSEMEDFEQAYKAAIDFAKKDKHTLVVATADHSTGGYSIGADGIYNWFSEPIKAAKRTPDFMAEKIADGADVEKTLKTYIDQKKLALTKAEIQSVEEAAKSKEVLDIDNAIENIFNKRSHTGWTTGGHTGEDVPVYAYGPSSETFAGQIDNTEIAKNVFKALQYNIKINDK</sequence>
<protein>
    <recommendedName>
        <fullName>Alkaline phosphatase 3</fullName>
        <ecNumber>3.1.3.1</ecNumber>
    </recommendedName>
    <alternativeName>
        <fullName>Alkaline phosphatase III</fullName>
        <shortName>APase III</shortName>
    </alternativeName>
</protein>
<proteinExistence type="evidence at protein level"/>
<organism>
    <name type="scientific">Bacillus subtilis (strain 168)</name>
    <dbReference type="NCBI Taxonomy" id="224308"/>
    <lineage>
        <taxon>Bacteria</taxon>
        <taxon>Bacillati</taxon>
        <taxon>Bacillota</taxon>
        <taxon>Bacilli</taxon>
        <taxon>Bacillales</taxon>
        <taxon>Bacillaceae</taxon>
        <taxon>Bacillus</taxon>
    </lineage>
</organism>
<reference key="1">
    <citation type="journal article" date="1991" name="J. Biol. Chem.">
        <title>Bacillus subtilis alkaline phosphatases III and IV. Cloning, sequencing, and comparisons of deduced amino acid sequence with Escherichia coli alkaline phosphatase three-dimensional structure.</title>
        <authorList>
            <person name="Hulett F.M."/>
            <person name="Kim M.E."/>
            <person name="Bookstein C."/>
            <person name="Kapp N.V."/>
            <person name="Edwards C.W."/>
            <person name="Wyckoff H.W."/>
        </authorList>
    </citation>
    <scope>NUCLEOTIDE SEQUENCE [GENOMIC DNA]</scope>
    <source>
        <strain>168</strain>
    </source>
</reference>
<reference key="2">
    <citation type="journal article" date="1997" name="Microbiology">
        <title>Nucleotide sequence and analysis of the phoB-rrnE-groESL region of the Bacillus subtilis chromosome.</title>
        <authorList>
            <person name="Sadaie Y."/>
            <person name="Yata K."/>
            <person name="Fujita M."/>
            <person name="Sagai H."/>
            <person name="Itaya M."/>
            <person name="Kasahara Y."/>
            <person name="Ogasawara N."/>
        </authorList>
    </citation>
    <scope>NUCLEOTIDE SEQUENCE [GENOMIC DNA]</scope>
    <source>
        <strain>168 / JH642</strain>
    </source>
</reference>
<reference key="3">
    <citation type="journal article" date="1997" name="Nature">
        <title>The complete genome sequence of the Gram-positive bacterium Bacillus subtilis.</title>
        <authorList>
            <person name="Kunst F."/>
            <person name="Ogasawara N."/>
            <person name="Moszer I."/>
            <person name="Albertini A.M."/>
            <person name="Alloni G."/>
            <person name="Azevedo V."/>
            <person name="Bertero M.G."/>
            <person name="Bessieres P."/>
            <person name="Bolotin A."/>
            <person name="Borchert S."/>
            <person name="Borriss R."/>
            <person name="Boursier L."/>
            <person name="Brans A."/>
            <person name="Braun M."/>
            <person name="Brignell S.C."/>
            <person name="Bron S."/>
            <person name="Brouillet S."/>
            <person name="Bruschi C.V."/>
            <person name="Caldwell B."/>
            <person name="Capuano V."/>
            <person name="Carter N.M."/>
            <person name="Choi S.-K."/>
            <person name="Codani J.-J."/>
            <person name="Connerton I.F."/>
            <person name="Cummings N.J."/>
            <person name="Daniel R.A."/>
            <person name="Denizot F."/>
            <person name="Devine K.M."/>
            <person name="Duesterhoeft A."/>
            <person name="Ehrlich S.D."/>
            <person name="Emmerson P.T."/>
            <person name="Entian K.-D."/>
            <person name="Errington J."/>
            <person name="Fabret C."/>
            <person name="Ferrari E."/>
            <person name="Foulger D."/>
            <person name="Fritz C."/>
            <person name="Fujita M."/>
            <person name="Fujita Y."/>
            <person name="Fuma S."/>
            <person name="Galizzi A."/>
            <person name="Galleron N."/>
            <person name="Ghim S.-Y."/>
            <person name="Glaser P."/>
            <person name="Goffeau A."/>
            <person name="Golightly E.J."/>
            <person name="Grandi G."/>
            <person name="Guiseppi G."/>
            <person name="Guy B.J."/>
            <person name="Haga K."/>
            <person name="Haiech J."/>
            <person name="Harwood C.R."/>
            <person name="Henaut A."/>
            <person name="Hilbert H."/>
            <person name="Holsappel S."/>
            <person name="Hosono S."/>
            <person name="Hullo M.-F."/>
            <person name="Itaya M."/>
            <person name="Jones L.-M."/>
            <person name="Joris B."/>
            <person name="Karamata D."/>
            <person name="Kasahara Y."/>
            <person name="Klaerr-Blanchard M."/>
            <person name="Klein C."/>
            <person name="Kobayashi Y."/>
            <person name="Koetter P."/>
            <person name="Koningstein G."/>
            <person name="Krogh S."/>
            <person name="Kumano M."/>
            <person name="Kurita K."/>
            <person name="Lapidus A."/>
            <person name="Lardinois S."/>
            <person name="Lauber J."/>
            <person name="Lazarevic V."/>
            <person name="Lee S.-M."/>
            <person name="Levine A."/>
            <person name="Liu H."/>
            <person name="Masuda S."/>
            <person name="Mauel C."/>
            <person name="Medigue C."/>
            <person name="Medina N."/>
            <person name="Mellado R.P."/>
            <person name="Mizuno M."/>
            <person name="Moestl D."/>
            <person name="Nakai S."/>
            <person name="Noback M."/>
            <person name="Noone D."/>
            <person name="O'Reilly M."/>
            <person name="Ogawa K."/>
            <person name="Ogiwara A."/>
            <person name="Oudega B."/>
            <person name="Park S.-H."/>
            <person name="Parro V."/>
            <person name="Pohl T.M."/>
            <person name="Portetelle D."/>
            <person name="Porwollik S."/>
            <person name="Prescott A.M."/>
            <person name="Presecan E."/>
            <person name="Pujic P."/>
            <person name="Purnelle B."/>
            <person name="Rapoport G."/>
            <person name="Rey M."/>
            <person name="Reynolds S."/>
            <person name="Rieger M."/>
            <person name="Rivolta C."/>
            <person name="Rocha E."/>
            <person name="Roche B."/>
            <person name="Rose M."/>
            <person name="Sadaie Y."/>
            <person name="Sato T."/>
            <person name="Scanlan E."/>
            <person name="Schleich S."/>
            <person name="Schroeter R."/>
            <person name="Scoffone F."/>
            <person name="Sekiguchi J."/>
            <person name="Sekowska A."/>
            <person name="Seror S.J."/>
            <person name="Serror P."/>
            <person name="Shin B.-S."/>
            <person name="Soldo B."/>
            <person name="Sorokin A."/>
            <person name="Tacconi E."/>
            <person name="Takagi T."/>
            <person name="Takahashi H."/>
            <person name="Takemaru K."/>
            <person name="Takeuchi M."/>
            <person name="Tamakoshi A."/>
            <person name="Tanaka T."/>
            <person name="Terpstra P."/>
            <person name="Tognoni A."/>
            <person name="Tosato V."/>
            <person name="Uchiyama S."/>
            <person name="Vandenbol M."/>
            <person name="Vannier F."/>
            <person name="Vassarotti A."/>
            <person name="Viari A."/>
            <person name="Wambutt R."/>
            <person name="Wedler E."/>
            <person name="Wedler H."/>
            <person name="Weitzenegger T."/>
            <person name="Winters P."/>
            <person name="Wipat A."/>
            <person name="Yamamoto H."/>
            <person name="Yamane K."/>
            <person name="Yasumoto K."/>
            <person name="Yata K."/>
            <person name="Yoshida K."/>
            <person name="Yoshikawa H.-F."/>
            <person name="Zumstein E."/>
            <person name="Yoshikawa H."/>
            <person name="Danchin A."/>
        </authorList>
    </citation>
    <scope>NUCLEOTIDE SEQUENCE [LARGE SCALE GENOMIC DNA]</scope>
    <source>
        <strain>168</strain>
    </source>
</reference>
<reference key="4">
    <citation type="journal article" date="2009" name="Microbiology">
        <title>From a consortium sequence to a unified sequence: the Bacillus subtilis 168 reference genome a decade later.</title>
        <authorList>
            <person name="Barbe V."/>
            <person name="Cruveiller S."/>
            <person name="Kunst F."/>
            <person name="Lenoble P."/>
            <person name="Meurice G."/>
            <person name="Sekowska A."/>
            <person name="Vallenet D."/>
            <person name="Wang T."/>
            <person name="Moszer I."/>
            <person name="Medigue C."/>
            <person name="Danchin A."/>
        </authorList>
    </citation>
    <scope>SEQUENCE REVISION TO 334</scope>
</reference>
<reference key="5">
    <citation type="journal article" date="1990" name="J. Bacteriol.">
        <title>The Bacillus subtilis 168 alkaline phosphatase III gene: impact of a phoAIII mutation on total alkaline phosphatase synthesis.</title>
        <authorList>
            <person name="Bookstein C."/>
            <person name="Edwards C.W."/>
            <person name="Kapp N.V."/>
            <person name="Hulett F.M."/>
        </authorList>
    </citation>
    <scope>NUCLEOTIDE SEQUENCE [GENOMIC DNA] OF 1-80</scope>
    <source>
        <strain>168</strain>
    </source>
</reference>
<reference key="6">
    <citation type="journal article" date="1990" name="J. Bacteriol.">
        <title>Evidence for two structural genes for alkaline phosphatase in Bacillus subtilis.</title>
        <authorList>
            <person name="Hulett F.M."/>
            <person name="Bookstein C."/>
            <person name="Jensen K."/>
        </authorList>
    </citation>
    <scope>PROTEIN SEQUENCE OF 33-62</scope>
</reference>
<feature type="signal peptide" evidence="3">
    <location>
        <begin position="1"/>
        <end position="32"/>
    </location>
</feature>
<feature type="chain" id="PRO_0000024010" description="Alkaline phosphatase 3">
    <location>
        <begin position="33"/>
        <end position="462"/>
    </location>
</feature>
<feature type="active site" description="Phosphoserine intermediate" evidence="2">
    <location>
        <position position="101"/>
    </location>
</feature>
<feature type="binding site" evidence="1">
    <location>
        <position position="52"/>
    </location>
    <ligand>
        <name>Mg(2+)</name>
        <dbReference type="ChEBI" id="CHEBI:18420"/>
    </ligand>
</feature>
<feature type="binding site" evidence="1">
    <location>
        <position position="52"/>
    </location>
    <ligand>
        <name>Zn(2+)</name>
        <dbReference type="ChEBI" id="CHEBI:29105"/>
        <label>2</label>
    </ligand>
</feature>
<feature type="binding site" evidence="1">
    <location>
        <position position="154"/>
    </location>
    <ligand>
        <name>Mg(2+)</name>
        <dbReference type="ChEBI" id="CHEBI:18420"/>
    </ligand>
</feature>
<feature type="binding site" evidence="1">
    <location>
        <position position="275"/>
    </location>
    <ligand>
        <name>Mg(2+)</name>
        <dbReference type="ChEBI" id="CHEBI:18420"/>
    </ligand>
</feature>
<feature type="binding site" evidence="1">
    <location>
        <position position="280"/>
    </location>
    <ligand>
        <name>Zn(2+)</name>
        <dbReference type="ChEBI" id="CHEBI:29105"/>
        <label>1</label>
    </ligand>
</feature>
<feature type="binding site" evidence="1">
    <location>
        <position position="284"/>
    </location>
    <ligand>
        <name>Zn(2+)</name>
        <dbReference type="ChEBI" id="CHEBI:29105"/>
        <label>1</label>
    </ligand>
</feature>
<feature type="binding site" evidence="1">
    <location>
        <position position="322"/>
    </location>
    <ligand>
        <name>Zn(2+)</name>
        <dbReference type="ChEBI" id="CHEBI:29105"/>
        <label>2</label>
    </ligand>
</feature>
<feature type="binding site" evidence="1">
    <location>
        <position position="323"/>
    </location>
    <ligand>
        <name>Zn(2+)</name>
        <dbReference type="ChEBI" id="CHEBI:29105"/>
        <label>2</label>
    </ligand>
</feature>
<feature type="binding site" evidence="1">
    <location>
        <position position="419"/>
    </location>
    <ligand>
        <name>Zn(2+)</name>
        <dbReference type="ChEBI" id="CHEBI:29105"/>
        <label>1</label>
    </ligand>
</feature>
<feature type="sequence conflict" description="In Ref. 1." evidence="4" ref="1">
    <original>Y</original>
    <variation>S</variation>
    <location>
        <position position="215"/>
    </location>
</feature>
<feature type="sequence conflict" description="In Ref. 1." evidence="4" ref="1">
    <original>FA</original>
    <variation>LP</variation>
    <location>
        <begin position="234"/>
        <end position="235"/>
    </location>
</feature>
<feature type="sequence conflict" description="In Ref. 2; BAA19698." evidence="4" ref="2">
    <original>G</original>
    <variation>S</variation>
    <location>
        <position position="334"/>
    </location>
</feature>
<accession>P19405</accession>
<accession>O05498</accession>
<name>PPB3_BACSU</name>
<dbReference type="EC" id="3.1.3.1"/>
<dbReference type="EMBL" id="D88802">
    <property type="protein sequence ID" value="BAA19698.1"/>
    <property type="molecule type" value="Genomic_DNA"/>
</dbReference>
<dbReference type="EMBL" id="AL009126">
    <property type="protein sequence ID" value="CAB12393.2"/>
    <property type="molecule type" value="Genomic_DNA"/>
</dbReference>
<dbReference type="EMBL" id="M33634">
    <property type="protein sequence ID" value="AAA22658.1"/>
    <property type="molecule type" value="Genomic_DNA"/>
</dbReference>
<dbReference type="PIR" id="C69676">
    <property type="entry name" value="C69676"/>
</dbReference>
<dbReference type="RefSeq" id="NP_388455.2">
    <property type="nucleotide sequence ID" value="NC_000964.3"/>
</dbReference>
<dbReference type="RefSeq" id="WP_003234119.1">
    <property type="nucleotide sequence ID" value="NZ_OZ025638.1"/>
</dbReference>
<dbReference type="SMR" id="P19405"/>
<dbReference type="FunCoup" id="P19405">
    <property type="interactions" value="334"/>
</dbReference>
<dbReference type="STRING" id="224308.BSU05740"/>
<dbReference type="PaxDb" id="224308-BSU05740"/>
<dbReference type="EnsemblBacteria" id="CAB12393">
    <property type="protein sequence ID" value="CAB12393"/>
    <property type="gene ID" value="BSU_05740"/>
</dbReference>
<dbReference type="GeneID" id="938004"/>
<dbReference type="KEGG" id="bsu:BSU05740"/>
<dbReference type="PATRIC" id="fig|224308.43.peg.602"/>
<dbReference type="eggNOG" id="COG1785">
    <property type="taxonomic scope" value="Bacteria"/>
</dbReference>
<dbReference type="InParanoid" id="P19405"/>
<dbReference type="OrthoDB" id="9794455at2"/>
<dbReference type="PhylomeDB" id="P19405"/>
<dbReference type="BioCyc" id="BSUB:BSU05740-MONOMER"/>
<dbReference type="Proteomes" id="UP000001570">
    <property type="component" value="Chromosome"/>
</dbReference>
<dbReference type="GO" id="GO:0004035">
    <property type="term" value="F:alkaline phosphatase activity"/>
    <property type="evidence" value="ECO:0000318"/>
    <property type="project" value="GO_Central"/>
</dbReference>
<dbReference type="GO" id="GO:0046872">
    <property type="term" value="F:metal ion binding"/>
    <property type="evidence" value="ECO:0007669"/>
    <property type="project" value="UniProtKB-KW"/>
</dbReference>
<dbReference type="CDD" id="cd16012">
    <property type="entry name" value="ALP"/>
    <property type="match status" value="1"/>
</dbReference>
<dbReference type="Gene3D" id="1.10.60.40">
    <property type="match status" value="1"/>
</dbReference>
<dbReference type="Gene3D" id="3.40.720.10">
    <property type="entry name" value="Alkaline Phosphatase, subunit A"/>
    <property type="match status" value="1"/>
</dbReference>
<dbReference type="InterPro" id="IPR001952">
    <property type="entry name" value="Alkaline_phosphatase"/>
</dbReference>
<dbReference type="InterPro" id="IPR018299">
    <property type="entry name" value="Alkaline_phosphatase_AS"/>
</dbReference>
<dbReference type="InterPro" id="IPR017850">
    <property type="entry name" value="Alkaline_phosphatase_core_sf"/>
</dbReference>
<dbReference type="PANTHER" id="PTHR11596">
    <property type="entry name" value="ALKALINE PHOSPHATASE"/>
    <property type="match status" value="1"/>
</dbReference>
<dbReference type="PANTHER" id="PTHR11596:SF5">
    <property type="entry name" value="ALKALINE PHOSPHATASE"/>
    <property type="match status" value="1"/>
</dbReference>
<dbReference type="Pfam" id="PF00245">
    <property type="entry name" value="Alk_phosphatase"/>
    <property type="match status" value="1"/>
</dbReference>
<dbReference type="PRINTS" id="PR00113">
    <property type="entry name" value="ALKPHPHTASE"/>
</dbReference>
<dbReference type="SMART" id="SM00098">
    <property type="entry name" value="alkPPc"/>
    <property type="match status" value="1"/>
</dbReference>
<dbReference type="SUPFAM" id="SSF53649">
    <property type="entry name" value="Alkaline phosphatase-like"/>
    <property type="match status" value="1"/>
</dbReference>
<dbReference type="PROSITE" id="PS00123">
    <property type="entry name" value="ALKALINE_PHOSPHATASE"/>
    <property type="match status" value="1"/>
</dbReference>
<keyword id="KW-0903">Direct protein sequencing</keyword>
<keyword id="KW-0378">Hydrolase</keyword>
<keyword id="KW-0460">Magnesium</keyword>
<keyword id="KW-0479">Metal-binding</keyword>
<keyword id="KW-0597">Phosphoprotein</keyword>
<keyword id="KW-1185">Reference proteome</keyword>
<keyword id="KW-0732">Signal</keyword>
<keyword id="KW-0862">Zinc</keyword>